<name>ETAA1_MOUSE</name>
<gene>
    <name evidence="6" type="primary">Etaa1</name>
</gene>
<keyword id="KW-0025">Alternative splicing</keyword>
<keyword id="KW-0175">Coiled coil</keyword>
<keyword id="KW-0227">DNA damage</keyword>
<keyword id="KW-0234">DNA repair</keyword>
<keyword id="KW-1017">Isopeptide bond</keyword>
<keyword id="KW-0539">Nucleus</keyword>
<keyword id="KW-0597">Phosphoprotein</keyword>
<keyword id="KW-1185">Reference proteome</keyword>
<keyword id="KW-0832">Ubl conjugation</keyword>
<reference key="1">
    <citation type="journal article" date="2005" name="Science">
        <title>The transcriptional landscape of the mammalian genome.</title>
        <authorList>
            <person name="Carninci P."/>
            <person name="Kasukawa T."/>
            <person name="Katayama S."/>
            <person name="Gough J."/>
            <person name="Frith M.C."/>
            <person name="Maeda N."/>
            <person name="Oyama R."/>
            <person name="Ravasi T."/>
            <person name="Lenhard B."/>
            <person name="Wells C."/>
            <person name="Kodzius R."/>
            <person name="Shimokawa K."/>
            <person name="Bajic V.B."/>
            <person name="Brenner S.E."/>
            <person name="Batalov S."/>
            <person name="Forrest A.R."/>
            <person name="Zavolan M."/>
            <person name="Davis M.J."/>
            <person name="Wilming L.G."/>
            <person name="Aidinis V."/>
            <person name="Allen J.E."/>
            <person name="Ambesi-Impiombato A."/>
            <person name="Apweiler R."/>
            <person name="Aturaliya R.N."/>
            <person name="Bailey T.L."/>
            <person name="Bansal M."/>
            <person name="Baxter L."/>
            <person name="Beisel K.W."/>
            <person name="Bersano T."/>
            <person name="Bono H."/>
            <person name="Chalk A.M."/>
            <person name="Chiu K.P."/>
            <person name="Choudhary V."/>
            <person name="Christoffels A."/>
            <person name="Clutterbuck D.R."/>
            <person name="Crowe M.L."/>
            <person name="Dalla E."/>
            <person name="Dalrymple B.P."/>
            <person name="de Bono B."/>
            <person name="Della Gatta G."/>
            <person name="di Bernardo D."/>
            <person name="Down T."/>
            <person name="Engstrom P."/>
            <person name="Fagiolini M."/>
            <person name="Faulkner G."/>
            <person name="Fletcher C.F."/>
            <person name="Fukushima T."/>
            <person name="Furuno M."/>
            <person name="Futaki S."/>
            <person name="Gariboldi M."/>
            <person name="Georgii-Hemming P."/>
            <person name="Gingeras T.R."/>
            <person name="Gojobori T."/>
            <person name="Green R.E."/>
            <person name="Gustincich S."/>
            <person name="Harbers M."/>
            <person name="Hayashi Y."/>
            <person name="Hensch T.K."/>
            <person name="Hirokawa N."/>
            <person name="Hill D."/>
            <person name="Huminiecki L."/>
            <person name="Iacono M."/>
            <person name="Ikeo K."/>
            <person name="Iwama A."/>
            <person name="Ishikawa T."/>
            <person name="Jakt M."/>
            <person name="Kanapin A."/>
            <person name="Katoh M."/>
            <person name="Kawasawa Y."/>
            <person name="Kelso J."/>
            <person name="Kitamura H."/>
            <person name="Kitano H."/>
            <person name="Kollias G."/>
            <person name="Krishnan S.P."/>
            <person name="Kruger A."/>
            <person name="Kummerfeld S.K."/>
            <person name="Kurochkin I.V."/>
            <person name="Lareau L.F."/>
            <person name="Lazarevic D."/>
            <person name="Lipovich L."/>
            <person name="Liu J."/>
            <person name="Liuni S."/>
            <person name="McWilliam S."/>
            <person name="Madan Babu M."/>
            <person name="Madera M."/>
            <person name="Marchionni L."/>
            <person name="Matsuda H."/>
            <person name="Matsuzawa S."/>
            <person name="Miki H."/>
            <person name="Mignone F."/>
            <person name="Miyake S."/>
            <person name="Morris K."/>
            <person name="Mottagui-Tabar S."/>
            <person name="Mulder N."/>
            <person name="Nakano N."/>
            <person name="Nakauchi H."/>
            <person name="Ng P."/>
            <person name="Nilsson R."/>
            <person name="Nishiguchi S."/>
            <person name="Nishikawa S."/>
            <person name="Nori F."/>
            <person name="Ohara O."/>
            <person name="Okazaki Y."/>
            <person name="Orlando V."/>
            <person name="Pang K.C."/>
            <person name="Pavan W.J."/>
            <person name="Pavesi G."/>
            <person name="Pesole G."/>
            <person name="Petrovsky N."/>
            <person name="Piazza S."/>
            <person name="Reed J."/>
            <person name="Reid J.F."/>
            <person name="Ring B.Z."/>
            <person name="Ringwald M."/>
            <person name="Rost B."/>
            <person name="Ruan Y."/>
            <person name="Salzberg S.L."/>
            <person name="Sandelin A."/>
            <person name="Schneider C."/>
            <person name="Schoenbach C."/>
            <person name="Sekiguchi K."/>
            <person name="Semple C.A."/>
            <person name="Seno S."/>
            <person name="Sessa L."/>
            <person name="Sheng Y."/>
            <person name="Shibata Y."/>
            <person name="Shimada H."/>
            <person name="Shimada K."/>
            <person name="Silva D."/>
            <person name="Sinclair B."/>
            <person name="Sperling S."/>
            <person name="Stupka E."/>
            <person name="Sugiura K."/>
            <person name="Sultana R."/>
            <person name="Takenaka Y."/>
            <person name="Taki K."/>
            <person name="Tammoja K."/>
            <person name="Tan S.L."/>
            <person name="Tang S."/>
            <person name="Taylor M.S."/>
            <person name="Tegner J."/>
            <person name="Teichmann S.A."/>
            <person name="Ueda H.R."/>
            <person name="van Nimwegen E."/>
            <person name="Verardo R."/>
            <person name="Wei C.L."/>
            <person name="Yagi K."/>
            <person name="Yamanishi H."/>
            <person name="Zabarovsky E."/>
            <person name="Zhu S."/>
            <person name="Zimmer A."/>
            <person name="Hide W."/>
            <person name="Bult C."/>
            <person name="Grimmond S.M."/>
            <person name="Teasdale R.D."/>
            <person name="Liu E.T."/>
            <person name="Brusic V."/>
            <person name="Quackenbush J."/>
            <person name="Wahlestedt C."/>
            <person name="Mattick J.S."/>
            <person name="Hume D.A."/>
            <person name="Kai C."/>
            <person name="Sasaki D."/>
            <person name="Tomaru Y."/>
            <person name="Fukuda S."/>
            <person name="Kanamori-Katayama M."/>
            <person name="Suzuki M."/>
            <person name="Aoki J."/>
            <person name="Arakawa T."/>
            <person name="Iida J."/>
            <person name="Imamura K."/>
            <person name="Itoh M."/>
            <person name="Kato T."/>
            <person name="Kawaji H."/>
            <person name="Kawagashira N."/>
            <person name="Kawashima T."/>
            <person name="Kojima M."/>
            <person name="Kondo S."/>
            <person name="Konno H."/>
            <person name="Nakano K."/>
            <person name="Ninomiya N."/>
            <person name="Nishio T."/>
            <person name="Okada M."/>
            <person name="Plessy C."/>
            <person name="Shibata K."/>
            <person name="Shiraki T."/>
            <person name="Suzuki S."/>
            <person name="Tagami M."/>
            <person name="Waki K."/>
            <person name="Watahiki A."/>
            <person name="Okamura-Oho Y."/>
            <person name="Suzuki H."/>
            <person name="Kawai J."/>
            <person name="Hayashizaki Y."/>
        </authorList>
    </citation>
    <scope>NUCLEOTIDE SEQUENCE [LARGE SCALE MRNA] (ISOFORMS 2 AND 3)</scope>
    <scope>NUCLEOTIDE SEQUENCE [LARGE SCALE MRNA] OF 1-852 (ISOFORM 1)</scope>
    <source>
        <strain>C57BL/6J</strain>
        <tissue>Cecum</tissue>
        <tissue>Diencephalon</tissue>
    </source>
</reference>
<reference key="2">
    <citation type="journal article" date="2009" name="PLoS Biol.">
        <title>Lineage-specific biology revealed by a finished genome assembly of the mouse.</title>
        <authorList>
            <person name="Church D.M."/>
            <person name="Goodstadt L."/>
            <person name="Hillier L.W."/>
            <person name="Zody M.C."/>
            <person name="Goldstein S."/>
            <person name="She X."/>
            <person name="Bult C.J."/>
            <person name="Agarwala R."/>
            <person name="Cherry J.L."/>
            <person name="DiCuccio M."/>
            <person name="Hlavina W."/>
            <person name="Kapustin Y."/>
            <person name="Meric P."/>
            <person name="Maglott D."/>
            <person name="Birtle Z."/>
            <person name="Marques A.C."/>
            <person name="Graves T."/>
            <person name="Zhou S."/>
            <person name="Teague B."/>
            <person name="Potamousis K."/>
            <person name="Churas C."/>
            <person name="Place M."/>
            <person name="Herschleb J."/>
            <person name="Runnheim R."/>
            <person name="Forrest D."/>
            <person name="Amos-Landgraf J."/>
            <person name="Schwartz D.C."/>
            <person name="Cheng Z."/>
            <person name="Lindblad-Toh K."/>
            <person name="Eichler E.E."/>
            <person name="Ponting C.P."/>
        </authorList>
    </citation>
    <scope>NUCLEOTIDE SEQUENCE [LARGE SCALE GENOMIC DNA]</scope>
    <source>
        <strain>C57BL/6J</strain>
    </source>
</reference>
<reference key="3">
    <citation type="journal article" date="2004" name="Genome Res.">
        <title>The status, quality, and expansion of the NIH full-length cDNA project: the Mammalian Gene Collection (MGC).</title>
        <authorList>
            <consortium name="The MGC Project Team"/>
        </authorList>
    </citation>
    <scope>NUCLEOTIDE SEQUENCE [LARGE SCALE MRNA] (ISOFORM 1)</scope>
    <source>
        <strain>Czech II</strain>
        <tissue>Mammary tumor</tissue>
    </source>
</reference>
<sequence>MQLKDGGTGMSRRRKHADSPARRSTPHRAAAKNCRPAAEPWLRESRAACSSQLRRAGTRSARRAQRQAAADGGRSPRGKETPVQIVKMDLLSCTFSSPNDPDGQTDIFWDQNSPMTKQLGKGRKKQISSAYSDEISHIVNRIAPQDEKPVTNSMLGVWIGETAIPCTPGVAKEKSRVKASCTKLKTKNREKELMKLAQQFDKNMEELDVIQEQDGKNHDFIQMTSKMGHLDNHKDSVQKPSGDVVPEITCTPVKKQMKGDSRISLAKAQDSSQKPFDQNVEAAFNAIFDGSTQMCSGQLSQDLLDAFLNNSKTSLRKKNALLQEEIITTETLLTENLLNKTPISLSPQIDTTVILNSCVTPCPKTPAAPDTQLDELTANDFEDDWESLLGSEPFLMENAEMLEFVPSTTAQDTCQKAICTSVGENDTITSRTNMNLGGRLRDSKVTLDLPSKTRNGELRNAGEHRFSSHPGDESRKVPFTGNKVSFEKSVTSIVSKDEDYVAVSNLEKVKEDSRNKCILNKHSSNKSSSYTRYPSKQSSELGVNLPLQVPTTDPFDSVFLGKENIVCSTNQSHGSKLNSSFDDWNDPLLASEMVEACHRLEATWDAGEVDDDLFCQACDDIERLTQQENKGSEESESVSYTSTRGSRSSSTASKQASQSAPSKHWNVVSSAVPLSLANKSQMSKPVTVQKRGRCGDGPNILDATNLSVCSKNSSDNKRGPVQVNSSKFVLGGSSNLNVNLGLMSTKIATNMKLSTQQLSHNSLADTAQNDNKILKLPKFTFKKKNPQLNQNHLVGSVPVGKISEDLGKRETVNSLLEANQQQSSINYSESLKPSSPDEEERNRKYSPEEIQRKRQEALVRRKAKALHTVQSAPISLP</sequence>
<accession>Q5SVT3</accession>
<accession>Q8BZM6</accession>
<accession>Q8K332</accession>
<accession>Q9CS19</accession>
<accession>Q9D2Z9</accession>
<protein>
    <recommendedName>
        <fullName evidence="1">Ewing's tumor-associated antigen 1 homolog</fullName>
    </recommendedName>
</protein>
<dbReference type="EMBL" id="AK018594">
    <property type="protein sequence ID" value="BAB31298.1"/>
    <property type="molecule type" value="mRNA"/>
</dbReference>
<dbReference type="EMBL" id="AK034138">
    <property type="protein sequence ID" value="BAC28601.1"/>
    <property type="molecule type" value="mRNA"/>
</dbReference>
<dbReference type="EMBL" id="AK019965">
    <property type="protein sequence ID" value="BAB31940.3"/>
    <property type="molecule type" value="mRNA"/>
</dbReference>
<dbReference type="EMBL" id="AL627070">
    <property type="status" value="NOT_ANNOTATED_CDS"/>
    <property type="molecule type" value="Genomic_DNA"/>
</dbReference>
<dbReference type="EMBL" id="BC028916">
    <property type="protein sequence ID" value="AAH28916.1"/>
    <property type="molecule type" value="mRNA"/>
</dbReference>
<dbReference type="CCDS" id="CCDS24452.1">
    <molecule id="Q5SVT3-1"/>
</dbReference>
<dbReference type="RefSeq" id="NP_001349899.1">
    <molecule id="Q5SVT3-2"/>
    <property type="nucleotide sequence ID" value="NM_001362970.1"/>
</dbReference>
<dbReference type="RefSeq" id="NP_080852.2">
    <molecule id="Q5SVT3-1"/>
    <property type="nucleotide sequence ID" value="NM_026576.4"/>
</dbReference>
<dbReference type="RefSeq" id="XP_006514863.1">
    <property type="nucleotide sequence ID" value="XM_006514800.3"/>
</dbReference>
<dbReference type="SMR" id="Q5SVT3"/>
<dbReference type="FunCoup" id="Q5SVT3">
    <property type="interactions" value="2674"/>
</dbReference>
<dbReference type="STRING" id="10090.ENSMUSP00000075957"/>
<dbReference type="iPTMnet" id="Q5SVT3"/>
<dbReference type="PhosphoSitePlus" id="Q5SVT3"/>
<dbReference type="jPOST" id="Q5SVT3"/>
<dbReference type="PaxDb" id="10090-ENSMUSP00000075957"/>
<dbReference type="ProteomicsDB" id="275694">
    <molecule id="Q5SVT3-1"/>
</dbReference>
<dbReference type="ProteomicsDB" id="275695">
    <molecule id="Q5SVT3-2"/>
</dbReference>
<dbReference type="ProteomicsDB" id="275696">
    <molecule id="Q5SVT3-3"/>
</dbReference>
<dbReference type="Antibodypedia" id="47441">
    <property type="antibodies" value="55 antibodies from 20 providers"/>
</dbReference>
<dbReference type="DNASU" id="68145"/>
<dbReference type="Ensembl" id="ENSMUST00000076661.7">
    <molecule id="Q5SVT3-1"/>
    <property type="protein sequence ID" value="ENSMUSP00000075957.7"/>
    <property type="gene ID" value="ENSMUSG00000016984.8"/>
</dbReference>
<dbReference type="GeneID" id="68145"/>
<dbReference type="KEGG" id="mmu:68145"/>
<dbReference type="UCSC" id="uc007icf.2">
    <molecule id="Q5SVT3-1"/>
    <property type="organism name" value="mouse"/>
</dbReference>
<dbReference type="AGR" id="MGI:1915395"/>
<dbReference type="CTD" id="54465"/>
<dbReference type="MGI" id="MGI:1915395">
    <property type="gene designation" value="Etaa1"/>
</dbReference>
<dbReference type="VEuPathDB" id="HostDB:ENSMUSG00000016984"/>
<dbReference type="eggNOG" id="ENOG502QTMP">
    <property type="taxonomic scope" value="Eukaryota"/>
</dbReference>
<dbReference type="GeneTree" id="ENSGT00390000009597"/>
<dbReference type="HOGENOM" id="CLU_015351_0_0_1"/>
<dbReference type="InParanoid" id="Q5SVT3"/>
<dbReference type="OMA" id="CITGSMS"/>
<dbReference type="OrthoDB" id="9378993at2759"/>
<dbReference type="PhylomeDB" id="Q5SVT3"/>
<dbReference type="TreeFam" id="TF333863"/>
<dbReference type="BioGRID-ORCS" id="68145">
    <property type="hits" value="2 hits in 78 CRISPR screens"/>
</dbReference>
<dbReference type="ChiTaRS" id="Etaa1">
    <property type="organism name" value="mouse"/>
</dbReference>
<dbReference type="PRO" id="PR:Q5SVT3"/>
<dbReference type="Proteomes" id="UP000000589">
    <property type="component" value="Chromosome 11"/>
</dbReference>
<dbReference type="RNAct" id="Q5SVT3">
    <property type="molecule type" value="protein"/>
</dbReference>
<dbReference type="Bgee" id="ENSMUSG00000016984">
    <property type="expression patterns" value="Expressed in primary oocyte and 234 other cell types or tissues"/>
</dbReference>
<dbReference type="GO" id="GO:0005829">
    <property type="term" value="C:cytosol"/>
    <property type="evidence" value="ECO:0007669"/>
    <property type="project" value="Ensembl"/>
</dbReference>
<dbReference type="GO" id="GO:0043596">
    <property type="term" value="C:nuclear replication fork"/>
    <property type="evidence" value="ECO:0000250"/>
    <property type="project" value="UniProtKB"/>
</dbReference>
<dbReference type="GO" id="GO:0016607">
    <property type="term" value="C:nuclear speck"/>
    <property type="evidence" value="ECO:0007669"/>
    <property type="project" value="Ensembl"/>
</dbReference>
<dbReference type="GO" id="GO:0005886">
    <property type="term" value="C:plasma membrane"/>
    <property type="evidence" value="ECO:0007669"/>
    <property type="project" value="Ensembl"/>
</dbReference>
<dbReference type="GO" id="GO:0043539">
    <property type="term" value="F:protein serine/threonine kinase activator activity"/>
    <property type="evidence" value="ECO:0000250"/>
    <property type="project" value="UniProtKB"/>
</dbReference>
<dbReference type="GO" id="GO:0006974">
    <property type="term" value="P:DNA damage response"/>
    <property type="evidence" value="ECO:0000250"/>
    <property type="project" value="UniProtKB"/>
</dbReference>
<dbReference type="GO" id="GO:0006281">
    <property type="term" value="P:DNA repair"/>
    <property type="evidence" value="ECO:0007669"/>
    <property type="project" value="UniProtKB-KW"/>
</dbReference>
<dbReference type="GO" id="GO:0044818">
    <property type="term" value="P:mitotic G2/M transition checkpoint"/>
    <property type="evidence" value="ECO:0007669"/>
    <property type="project" value="Ensembl"/>
</dbReference>
<dbReference type="GO" id="GO:0071902">
    <property type="term" value="P:positive regulation of protein serine/threonine kinase activity"/>
    <property type="evidence" value="ECO:0000250"/>
    <property type="project" value="UniProtKB"/>
</dbReference>
<dbReference type="GO" id="GO:2000001">
    <property type="term" value="P:regulation of DNA damage checkpoint"/>
    <property type="evidence" value="ECO:0000250"/>
    <property type="project" value="UniProtKB"/>
</dbReference>
<dbReference type="GO" id="GO:0031297">
    <property type="term" value="P:replication fork processing"/>
    <property type="evidence" value="ECO:0000250"/>
    <property type="project" value="UniProtKB"/>
</dbReference>
<dbReference type="InterPro" id="IPR029406">
    <property type="entry name" value="ETAA1"/>
</dbReference>
<dbReference type="PANTHER" id="PTHR16434:SF2">
    <property type="entry name" value="EWING'S TUMOR-ASSOCIATED ANTIGEN 1"/>
    <property type="match status" value="1"/>
</dbReference>
<dbReference type="PANTHER" id="PTHR16434">
    <property type="entry name" value="EWING'S TUMOR-ASSOCIATED ANTIGEN 1 ETAA1"/>
    <property type="match status" value="1"/>
</dbReference>
<dbReference type="Pfam" id="PF15350">
    <property type="entry name" value="ETAA1"/>
    <property type="match status" value="1"/>
</dbReference>
<feature type="chain" id="PRO_0000280100" description="Ewing's tumor-associated antigen 1 homolog">
    <location>
        <begin position="1"/>
        <end position="877"/>
    </location>
</feature>
<feature type="region of interest" description="Disordered" evidence="3">
    <location>
        <begin position="1"/>
        <end position="82"/>
    </location>
</feature>
<feature type="region of interest" description="Disordered" evidence="3">
    <location>
        <begin position="450"/>
        <end position="479"/>
    </location>
</feature>
<feature type="region of interest" description="Disordered" evidence="3">
    <location>
        <begin position="626"/>
        <end position="664"/>
    </location>
</feature>
<feature type="region of interest" description="Disordered" evidence="3">
    <location>
        <begin position="818"/>
        <end position="877"/>
    </location>
</feature>
<feature type="coiled-coil region" evidence="2">
    <location>
        <begin position="185"/>
        <end position="213"/>
    </location>
</feature>
<feature type="coiled-coil region" evidence="2">
    <location>
        <begin position="306"/>
        <end position="335"/>
    </location>
</feature>
<feature type="short sequence motif" description="ATR-activation domain (AAD)" evidence="1">
    <location>
        <begin position="107"/>
        <end position="113"/>
    </location>
</feature>
<feature type="short sequence motif" description="RBM1 motif" evidence="1">
    <location>
        <begin position="607"/>
        <end position="622"/>
    </location>
</feature>
<feature type="short sequence motif" description="RBM2 motif" evidence="1">
    <location>
        <begin position="843"/>
        <end position="865"/>
    </location>
</feature>
<feature type="compositionally biased region" description="Basic residues" evidence="3">
    <location>
        <begin position="56"/>
        <end position="65"/>
    </location>
</feature>
<feature type="compositionally biased region" description="Basic and acidic residues" evidence="3">
    <location>
        <begin position="454"/>
        <end position="476"/>
    </location>
</feature>
<feature type="compositionally biased region" description="Low complexity" evidence="3">
    <location>
        <begin position="637"/>
        <end position="662"/>
    </location>
</feature>
<feature type="compositionally biased region" description="Polar residues" evidence="3">
    <location>
        <begin position="818"/>
        <end position="833"/>
    </location>
</feature>
<feature type="compositionally biased region" description="Basic and acidic residues" evidence="3">
    <location>
        <begin position="840"/>
        <end position="859"/>
    </location>
</feature>
<feature type="compositionally biased region" description="Polar residues" evidence="3">
    <location>
        <begin position="868"/>
        <end position="877"/>
    </location>
</feature>
<feature type="modified residue" description="Phosphoserine" evidence="1">
    <location>
        <position position="467"/>
    </location>
</feature>
<feature type="cross-link" description="Glycyl lysine isopeptide (Lys-Gly) (interchain with G-Cter in SUMO2)" evidence="1">
    <location>
        <position position="87"/>
    </location>
</feature>
<feature type="cross-link" description="Glycyl lysine isopeptide (Lys-Gly) (interchain with G-Cter in SUMO2)" evidence="1">
    <location>
        <position position="416"/>
    </location>
</feature>
<feature type="cross-link" description="Glycyl lysine isopeptide (Lys-Gly) (interchain with G-Cter in SUMO2)" evidence="1">
    <location>
        <position position="444"/>
    </location>
</feature>
<feature type="cross-link" description="Glycyl lysine isopeptide (Lys-Gly) (interchain with G-Cter in SUMO2)" evidence="1">
    <location>
        <position position="510"/>
    </location>
</feature>
<feature type="splice variant" id="VSP_023537" description="In isoform 3." evidence="4">
    <location>
        <begin position="1"/>
        <end position="222"/>
    </location>
</feature>
<feature type="splice variant" id="VSP_023538" description="In isoform 2." evidence="4">
    <location>
        <begin position="1"/>
        <end position="153"/>
    </location>
</feature>
<feature type="sequence conflict" description="In Ref. 3; AAH28916." evidence="5" ref="3">
    <original>A</original>
    <variation>S</variation>
    <location>
        <position position="21"/>
    </location>
</feature>
<feature type="sequence conflict" description="In Ref. 1; BAB31940." evidence="5" ref="1">
    <original>L</original>
    <variation>V</variation>
    <location>
        <position position="196"/>
    </location>
</feature>
<feature type="sequence conflict" description="In Ref. 1; BAC28601." evidence="5" ref="1">
    <original>D</original>
    <variation>G</variation>
    <location>
        <position position="260"/>
    </location>
</feature>
<feature type="sequence conflict" description="In Ref. 1; BAC28601." evidence="5" ref="1">
    <original>D</original>
    <variation>G</variation>
    <location>
        <position position="302"/>
    </location>
</feature>
<feature type="sequence conflict" description="In Ref. 3; AAH28916." evidence="5" ref="3">
    <original>V</original>
    <variation>M</variation>
    <location>
        <position position="797"/>
    </location>
</feature>
<proteinExistence type="evidence at transcript level"/>
<evidence type="ECO:0000250" key="1">
    <source>
        <dbReference type="UniProtKB" id="Q9NY74"/>
    </source>
</evidence>
<evidence type="ECO:0000255" key="2"/>
<evidence type="ECO:0000256" key="3">
    <source>
        <dbReference type="SAM" id="MobiDB-lite"/>
    </source>
</evidence>
<evidence type="ECO:0000303" key="4">
    <source>
    </source>
</evidence>
<evidence type="ECO:0000305" key="5"/>
<evidence type="ECO:0000312" key="6">
    <source>
        <dbReference type="MGI" id="MGI:1915395"/>
    </source>
</evidence>
<comment type="function">
    <text evidence="1">Replication stress response protein that accumulates at DNA damage sites and promotes replication fork progression and integrity. Recruited to stalled replication forks via interaction with the RPA complex and directly stimulates ATR kinase activity independently of TOPBP1. Probably only regulates a subset of ATR targets.</text>
</comment>
<comment type="subunit">
    <text evidence="1">Interacts (via RBM1 motif) with RPA1. Interacts (via RBM2 motif) with RPA2. Interacts (via the ATR-activation domain motif) with ATR.</text>
</comment>
<comment type="subcellular location">
    <subcellularLocation>
        <location evidence="1">Nucleus</location>
    </subcellularLocation>
    <text evidence="1">Localizes at sites of DNA damage following replication stress. Recruited to stalled replication forks via interaction with RPA1 and RPA2 subunits of the RPA complex.</text>
</comment>
<comment type="alternative products">
    <event type="alternative splicing"/>
    <isoform>
        <id>Q5SVT3-1</id>
        <name>1</name>
        <sequence type="displayed"/>
    </isoform>
    <isoform>
        <id>Q5SVT3-2</id>
        <name>2</name>
        <sequence type="described" ref="VSP_023538"/>
    </isoform>
    <isoform>
        <id>Q5SVT3-3</id>
        <name>3</name>
        <sequence type="described" ref="VSP_023537"/>
    </isoform>
</comment>
<comment type="domain">
    <text evidence="1">The RBM1 (RPA1-binding, also named RPA70N-binding) motif mediates interaction with RPA1. The RBM2 (RPA2-binding, also named RPA32C-binding) motif mediates interaction with RPA2.</text>
</comment>
<comment type="domain">
    <text evidence="1">The ATR-activation domain (AAD) motif is required to bind and activate ATR.</text>
</comment>
<comment type="PTM">
    <text evidence="1">Phosphorylated by ATR.</text>
</comment>
<comment type="caution">
    <text evidence="5">It is uncertain whether Met-1 or Met-10 is the initiator.</text>
</comment>
<organism>
    <name type="scientific">Mus musculus</name>
    <name type="common">Mouse</name>
    <dbReference type="NCBI Taxonomy" id="10090"/>
    <lineage>
        <taxon>Eukaryota</taxon>
        <taxon>Metazoa</taxon>
        <taxon>Chordata</taxon>
        <taxon>Craniata</taxon>
        <taxon>Vertebrata</taxon>
        <taxon>Euteleostomi</taxon>
        <taxon>Mammalia</taxon>
        <taxon>Eutheria</taxon>
        <taxon>Euarchontoglires</taxon>
        <taxon>Glires</taxon>
        <taxon>Rodentia</taxon>
        <taxon>Myomorpha</taxon>
        <taxon>Muroidea</taxon>
        <taxon>Muridae</taxon>
        <taxon>Murinae</taxon>
        <taxon>Mus</taxon>
        <taxon>Mus</taxon>
    </lineage>
</organism>